<accession>P38291</accession>
<accession>D6VQG3</accession>
<accession>E9P8X7</accession>
<comment type="function">
    <text evidence="4 5">Component of ribonuclease P, a protein complex that generates mature tRNA molecules by cleaving their 5'-ends. Also a component of RNase MRP, which cleaves pre-rRNA sequences.</text>
</comment>
<comment type="catalytic activity">
    <reaction>
        <text>Endonucleolytic cleavage of RNA, removing 5'-extranucleotides from tRNA precursor.</text>
        <dbReference type="EC" id="3.1.26.5"/>
    </reaction>
</comment>
<comment type="subunit">
    <text evidence="3 5">Component of nuclear RNase P and RNase MRP complexes. RNase P consists of an RNA moiety and at least 9 protein subunits including POP1, POP3, POP4, POP5, POP6, POP7, POP8, RPP1 and RPR2. RNase MRP complex consists of an RNA moiety and at least 10 protein subunits including POP1, POP3, POP4, POP5, POP6, POP7, POP8, RMP1, RPP1 and SNM1, many of which are shared with the RNase P complex.</text>
</comment>
<comment type="interaction">
    <interactant intactId="EBI-13670">
        <id>P38291</id>
    </interactant>
    <interactant intactId="EBI-13621">
        <id>P41812</id>
        <label>POP1</label>
    </interactant>
    <organismsDiffer>false</organismsDiffer>
    <experiments>5</experiments>
</comment>
<comment type="interaction">
    <interactant intactId="EBI-13670">
        <id>P38291</id>
    </interactant>
    <interactant intactId="EBI-13646">
        <id>P38336</id>
        <label>POP4</label>
    </interactant>
    <organismsDiffer>false</organismsDiffer>
    <experiments>4</experiments>
</comment>
<comment type="interaction">
    <interactant intactId="EBI-13670">
        <id>P38291</id>
    </interactant>
    <interactant intactId="EBI-13662">
        <id>P53218</id>
        <label>POP6</label>
    </interactant>
    <organismsDiffer>false</organismsDiffer>
    <experiments>4</experiments>
</comment>
<comment type="subcellular location">
    <subcellularLocation>
        <location evidence="2">Nucleus</location>
    </subcellularLocation>
</comment>
<comment type="similarity">
    <text evidence="6">Belongs to the histone-like Alba family.</text>
</comment>
<sequence length="140" mass="15814">MALKKNTHNKSTKRVTKHPSLKTLTHKQIHTTIFVKSTTPYVSALKRINKFLDSVHKQGSSYVAVLGMGKAVEKTLALGCHFQDQKNKKIEVYTKTIEVLDEVITEGQADIDMESDVEDDDKETQLKKRAVSGVELRIYV</sequence>
<protein>
    <recommendedName>
        <fullName>Ribonucleases P/MRP protein subunit POP7</fullName>
        <ecNumber>3.1.26.5</ecNumber>
    </recommendedName>
    <alternativeName>
        <fullName>RNA-processing protein POP7</fullName>
    </alternativeName>
    <alternativeName>
        <fullName>RNases P/MRP 15.8 kDa subunit</fullName>
    </alternativeName>
</protein>
<feature type="chain" id="PRO_0000058519" description="Ribonucleases P/MRP protein subunit POP7">
    <location>
        <begin position="1"/>
        <end position="140"/>
    </location>
</feature>
<feature type="region of interest" description="Disordered" evidence="1">
    <location>
        <begin position="1"/>
        <end position="21"/>
    </location>
</feature>
<feature type="modified residue" description="Phosphoserine" evidence="7">
    <location>
        <position position="115"/>
    </location>
</feature>
<feature type="sequence conflict" description="In Ref. 4; AAT92849." evidence="6" ref="4">
    <original>V</original>
    <variation>I</variation>
    <location>
        <position position="92"/>
    </location>
</feature>
<feature type="strand" evidence="8">
    <location>
        <begin position="15"/>
        <end position="17"/>
    </location>
</feature>
<feature type="turn" evidence="8">
    <location>
        <begin position="28"/>
        <end position="31"/>
    </location>
</feature>
<feature type="strand" evidence="8">
    <location>
        <begin position="32"/>
        <end position="34"/>
    </location>
</feature>
<feature type="helix" evidence="8">
    <location>
        <begin position="41"/>
        <end position="58"/>
    </location>
</feature>
<feature type="strand" evidence="8">
    <location>
        <begin position="63"/>
        <end position="68"/>
    </location>
</feature>
<feature type="helix" evidence="8">
    <location>
        <begin position="69"/>
        <end position="71"/>
    </location>
</feature>
<feature type="helix" evidence="8">
    <location>
        <begin position="72"/>
        <end position="84"/>
    </location>
</feature>
<feature type="turn" evidence="8">
    <location>
        <begin position="85"/>
        <end position="87"/>
    </location>
</feature>
<feature type="strand" evidence="8">
    <location>
        <begin position="90"/>
        <end position="103"/>
    </location>
</feature>
<feature type="strand" evidence="8">
    <location>
        <begin position="119"/>
        <end position="122"/>
    </location>
</feature>
<feature type="strand" evidence="8">
    <location>
        <begin position="125"/>
        <end position="138"/>
    </location>
</feature>
<keyword id="KW-0002">3D-structure</keyword>
<keyword id="KW-0378">Hydrolase</keyword>
<keyword id="KW-0539">Nucleus</keyword>
<keyword id="KW-0597">Phosphoprotein</keyword>
<keyword id="KW-1185">Reference proteome</keyword>
<keyword id="KW-0698">rRNA processing</keyword>
<keyword id="KW-0819">tRNA processing</keyword>
<proteinExistence type="evidence at protein level"/>
<organism>
    <name type="scientific">Saccharomyces cerevisiae (strain ATCC 204508 / S288c)</name>
    <name type="common">Baker's yeast</name>
    <dbReference type="NCBI Taxonomy" id="559292"/>
    <lineage>
        <taxon>Eukaryota</taxon>
        <taxon>Fungi</taxon>
        <taxon>Dikarya</taxon>
        <taxon>Ascomycota</taxon>
        <taxon>Saccharomycotina</taxon>
        <taxon>Saccharomycetes</taxon>
        <taxon>Saccharomycetales</taxon>
        <taxon>Saccharomycetaceae</taxon>
        <taxon>Saccharomyces</taxon>
    </lineage>
</organism>
<dbReference type="EC" id="3.1.26.5"/>
<dbReference type="EMBL" id="AF055991">
    <property type="protein sequence ID" value="AAC24226.1"/>
    <property type="molecule type" value="Genomic_DNA"/>
</dbReference>
<dbReference type="EMBL" id="Z36036">
    <property type="protein sequence ID" value="CAA85128.1"/>
    <property type="molecule type" value="Genomic_DNA"/>
</dbReference>
<dbReference type="EMBL" id="AY692830">
    <property type="protein sequence ID" value="AAT92849.1"/>
    <property type="molecule type" value="Genomic_DNA"/>
</dbReference>
<dbReference type="EMBL" id="BK006936">
    <property type="protein sequence ID" value="DAA07283.1"/>
    <property type="molecule type" value="Genomic_DNA"/>
</dbReference>
<dbReference type="PIR" id="S46038">
    <property type="entry name" value="S46038"/>
</dbReference>
<dbReference type="RefSeq" id="NP_009726.3">
    <property type="nucleotide sequence ID" value="NM_001178515.3"/>
</dbReference>
<dbReference type="PDB" id="3IAB">
    <property type="method" value="X-ray"/>
    <property type="resolution" value="2.70 A"/>
    <property type="chains" value="B=1-140"/>
</dbReference>
<dbReference type="PDB" id="6AGB">
    <property type="method" value="EM"/>
    <property type="resolution" value="3.48 A"/>
    <property type="chains" value="G=1-140"/>
</dbReference>
<dbReference type="PDB" id="6AH3">
    <property type="method" value="EM"/>
    <property type="resolution" value="3.48 A"/>
    <property type="chains" value="G=1-140"/>
</dbReference>
<dbReference type="PDB" id="6W6V">
    <property type="method" value="EM"/>
    <property type="resolution" value="3.00 A"/>
    <property type="chains" value="G=1-140"/>
</dbReference>
<dbReference type="PDB" id="7C79">
    <property type="method" value="EM"/>
    <property type="resolution" value="2.50 A"/>
    <property type="chains" value="G=1-140"/>
</dbReference>
<dbReference type="PDB" id="7C7A">
    <property type="method" value="EM"/>
    <property type="resolution" value="2.80 A"/>
    <property type="chains" value="G=1-140"/>
</dbReference>
<dbReference type="PDBsum" id="3IAB"/>
<dbReference type="PDBsum" id="6AGB"/>
<dbReference type="PDBsum" id="6AH3"/>
<dbReference type="PDBsum" id="6W6V"/>
<dbReference type="PDBsum" id="7C79"/>
<dbReference type="PDBsum" id="7C7A"/>
<dbReference type="EMDB" id="EMD-21564"/>
<dbReference type="EMDB" id="EMD-30296"/>
<dbReference type="EMDB" id="EMD-30297"/>
<dbReference type="EMDB" id="EMD-9616"/>
<dbReference type="EMDB" id="EMD-9622"/>
<dbReference type="SMR" id="P38291"/>
<dbReference type="BioGRID" id="32867">
    <property type="interactions" value="502"/>
</dbReference>
<dbReference type="ComplexPortal" id="CPX-1873">
    <property type="entry name" value="Nucleolar ribonuclease P complex"/>
</dbReference>
<dbReference type="ComplexPortal" id="CPX-3284">
    <property type="entry name" value="Nucleolar ribonuclease MRP complex"/>
</dbReference>
<dbReference type="DIP" id="DIP-5462N"/>
<dbReference type="FunCoup" id="P38291">
    <property type="interactions" value="122"/>
</dbReference>
<dbReference type="IntAct" id="P38291">
    <property type="interactions" value="15"/>
</dbReference>
<dbReference type="MINT" id="P38291"/>
<dbReference type="STRING" id="4932.YBR167C"/>
<dbReference type="iPTMnet" id="P38291"/>
<dbReference type="PaxDb" id="4932-YBR167C"/>
<dbReference type="PeptideAtlas" id="P38291"/>
<dbReference type="TopDownProteomics" id="P38291"/>
<dbReference type="EnsemblFungi" id="YBR167C_mRNA">
    <property type="protein sequence ID" value="YBR167C"/>
    <property type="gene ID" value="YBR167C"/>
</dbReference>
<dbReference type="GeneID" id="852465"/>
<dbReference type="KEGG" id="sce:YBR167C"/>
<dbReference type="AGR" id="SGD:S000000371"/>
<dbReference type="SGD" id="S000000371">
    <property type="gene designation" value="POP7"/>
</dbReference>
<dbReference type="VEuPathDB" id="FungiDB:YBR167C"/>
<dbReference type="eggNOG" id="ENOG502S59H">
    <property type="taxonomic scope" value="Eukaryota"/>
</dbReference>
<dbReference type="HOGENOM" id="CLU_133944_0_0_1"/>
<dbReference type="InParanoid" id="P38291"/>
<dbReference type="OMA" id="GQADIDM"/>
<dbReference type="OrthoDB" id="5416589at2759"/>
<dbReference type="BioCyc" id="YEAST:YBR167C-MONOMER"/>
<dbReference type="BioGRID-ORCS" id="852465">
    <property type="hits" value="1 hit in 10 CRISPR screens"/>
</dbReference>
<dbReference type="CD-CODE" id="7CAF9006">
    <property type="entry name" value="Tam body"/>
</dbReference>
<dbReference type="EvolutionaryTrace" id="P38291"/>
<dbReference type="PRO" id="PR:P38291"/>
<dbReference type="Proteomes" id="UP000002311">
    <property type="component" value="Chromosome II"/>
</dbReference>
<dbReference type="RNAct" id="P38291">
    <property type="molecule type" value="protein"/>
</dbReference>
<dbReference type="GO" id="GO:0005655">
    <property type="term" value="C:nucleolar ribonuclease P complex"/>
    <property type="evidence" value="ECO:0000314"/>
    <property type="project" value="SGD"/>
</dbReference>
<dbReference type="GO" id="GO:0000172">
    <property type="term" value="C:ribonuclease MRP complex"/>
    <property type="evidence" value="ECO:0000314"/>
    <property type="project" value="SGD"/>
</dbReference>
<dbReference type="GO" id="GO:0005697">
    <property type="term" value="C:telomerase holoenzyme complex"/>
    <property type="evidence" value="ECO:0000314"/>
    <property type="project" value="SGD"/>
</dbReference>
<dbReference type="GO" id="GO:0004526">
    <property type="term" value="F:ribonuclease P activity"/>
    <property type="evidence" value="ECO:0007669"/>
    <property type="project" value="UniProtKB-EC"/>
</dbReference>
<dbReference type="GO" id="GO:0003723">
    <property type="term" value="F:RNA binding"/>
    <property type="evidence" value="ECO:0000314"/>
    <property type="project" value="SGD"/>
</dbReference>
<dbReference type="GO" id="GO:0034965">
    <property type="term" value="P:intronic box C/D snoRNA processing"/>
    <property type="evidence" value="ECO:0000314"/>
    <property type="project" value="SGD"/>
</dbReference>
<dbReference type="GO" id="GO:0000460">
    <property type="term" value="P:maturation of 5.8S rRNA"/>
    <property type="evidence" value="ECO:0000314"/>
    <property type="project" value="ComplexPortal"/>
</dbReference>
<dbReference type="GO" id="GO:0000294">
    <property type="term" value="P:nuclear-transcribed mRNA catabolic process, RNase MRP-dependent"/>
    <property type="evidence" value="ECO:0000314"/>
    <property type="project" value="SGD"/>
</dbReference>
<dbReference type="GO" id="GO:0006364">
    <property type="term" value="P:rRNA processing"/>
    <property type="evidence" value="ECO:0000315"/>
    <property type="project" value="SGD"/>
</dbReference>
<dbReference type="GO" id="GO:0001682">
    <property type="term" value="P:tRNA 5'-leader removal"/>
    <property type="evidence" value="ECO:0000314"/>
    <property type="project" value="ComplexPortal"/>
</dbReference>
<dbReference type="GO" id="GO:0008033">
    <property type="term" value="P:tRNA processing"/>
    <property type="evidence" value="ECO:0000315"/>
    <property type="project" value="SGD"/>
</dbReference>
<dbReference type="Gene3D" id="3.30.110.20">
    <property type="entry name" value="Alba-like domain"/>
    <property type="match status" value="1"/>
</dbReference>
<dbReference type="InterPro" id="IPR036882">
    <property type="entry name" value="Alba-like_dom_sf"/>
</dbReference>
<dbReference type="InterPro" id="IPR014612">
    <property type="entry name" value="Pop7/Rpp20"/>
</dbReference>
<dbReference type="InterPro" id="IPR020241">
    <property type="entry name" value="RNase_P/MRP_Pop7_fungi"/>
</dbReference>
<dbReference type="PANTHER" id="PTHR28256">
    <property type="entry name" value="RIBONUCLEASES P/MRP PROTEIN SUBUNIT POP7"/>
    <property type="match status" value="1"/>
</dbReference>
<dbReference type="PANTHER" id="PTHR28256:SF1">
    <property type="entry name" value="RIBONUCLEASES P_MRP PROTEIN SUBUNIT POP7"/>
    <property type="match status" value="1"/>
</dbReference>
<dbReference type="Pfam" id="PF12328">
    <property type="entry name" value="Rpp20"/>
    <property type="match status" value="1"/>
</dbReference>
<reference key="1">
    <citation type="journal article" date="1998" name="Proc. Natl. Acad. Sci. U.S.A.">
        <title>Rpp2, an essential protein subunit of nuclear RNase P, is required for processing of precursor tRNAs and 35S precursor rRNA in Saccharomyces cerevisiae.</title>
        <authorList>
            <person name="Stolc V."/>
            <person name="Katz A."/>
            <person name="Altman S."/>
        </authorList>
    </citation>
    <scope>NUCLEOTIDE SEQUENCE [GENOMIC DNA]</scope>
    <scope>FUNCTION</scope>
</reference>
<reference key="2">
    <citation type="journal article" date="1994" name="EMBO J.">
        <title>Complete DNA sequence of yeast chromosome II.</title>
        <authorList>
            <person name="Feldmann H."/>
            <person name="Aigle M."/>
            <person name="Aljinovic G."/>
            <person name="Andre B."/>
            <person name="Baclet M.C."/>
            <person name="Barthe C."/>
            <person name="Baur A."/>
            <person name="Becam A.-M."/>
            <person name="Biteau N."/>
            <person name="Boles E."/>
            <person name="Brandt T."/>
            <person name="Brendel M."/>
            <person name="Brueckner M."/>
            <person name="Bussereau F."/>
            <person name="Christiansen C."/>
            <person name="Contreras R."/>
            <person name="Crouzet M."/>
            <person name="Cziepluch C."/>
            <person name="Demolis N."/>
            <person name="Delaveau T."/>
            <person name="Doignon F."/>
            <person name="Domdey H."/>
            <person name="Duesterhus S."/>
            <person name="Dubois E."/>
            <person name="Dujon B."/>
            <person name="El Bakkoury M."/>
            <person name="Entian K.-D."/>
            <person name="Feuermann M."/>
            <person name="Fiers W."/>
            <person name="Fobo G.M."/>
            <person name="Fritz C."/>
            <person name="Gassenhuber J."/>
            <person name="Glansdorff N."/>
            <person name="Goffeau A."/>
            <person name="Grivell L.A."/>
            <person name="de Haan M."/>
            <person name="Hein C."/>
            <person name="Herbert C.J."/>
            <person name="Hollenberg C.P."/>
            <person name="Holmstroem K."/>
            <person name="Jacq C."/>
            <person name="Jacquet M."/>
            <person name="Jauniaux J.-C."/>
            <person name="Jonniaux J.-L."/>
            <person name="Kallesoee T."/>
            <person name="Kiesau P."/>
            <person name="Kirchrath L."/>
            <person name="Koetter P."/>
            <person name="Korol S."/>
            <person name="Liebl S."/>
            <person name="Logghe M."/>
            <person name="Lohan A.J.E."/>
            <person name="Louis E.J."/>
            <person name="Li Z.Y."/>
            <person name="Maat M.J."/>
            <person name="Mallet L."/>
            <person name="Mannhaupt G."/>
            <person name="Messenguy F."/>
            <person name="Miosga T."/>
            <person name="Molemans F."/>
            <person name="Mueller S."/>
            <person name="Nasr F."/>
            <person name="Obermaier B."/>
            <person name="Perea J."/>
            <person name="Pierard A."/>
            <person name="Piravandi E."/>
            <person name="Pohl F.M."/>
            <person name="Pohl T.M."/>
            <person name="Potier S."/>
            <person name="Proft M."/>
            <person name="Purnelle B."/>
            <person name="Ramezani Rad M."/>
            <person name="Rieger M."/>
            <person name="Rose M."/>
            <person name="Schaaff-Gerstenschlaeger I."/>
            <person name="Scherens B."/>
            <person name="Schwarzlose C."/>
            <person name="Skala J."/>
            <person name="Slonimski P.P."/>
            <person name="Smits P.H.M."/>
            <person name="Souciet J.-L."/>
            <person name="Steensma H.Y."/>
            <person name="Stucka R."/>
            <person name="Urrestarazu L.A."/>
            <person name="van der Aart Q.J.M."/>
            <person name="Van Dyck L."/>
            <person name="Vassarotti A."/>
            <person name="Vetter I."/>
            <person name="Vierendeels F."/>
            <person name="Vissers S."/>
            <person name="Wagner G."/>
            <person name="de Wergifosse P."/>
            <person name="Wolfe K.H."/>
            <person name="Zagulski M."/>
            <person name="Zimmermann F.K."/>
            <person name="Mewes H.-W."/>
            <person name="Kleine K."/>
        </authorList>
    </citation>
    <scope>NUCLEOTIDE SEQUENCE [LARGE SCALE GENOMIC DNA]</scope>
    <source>
        <strain>ATCC 204508 / S288c</strain>
    </source>
</reference>
<reference key="3">
    <citation type="journal article" date="2014" name="G3 (Bethesda)">
        <title>The reference genome sequence of Saccharomyces cerevisiae: Then and now.</title>
        <authorList>
            <person name="Engel S.R."/>
            <person name="Dietrich F.S."/>
            <person name="Fisk D.G."/>
            <person name="Binkley G."/>
            <person name="Balakrishnan R."/>
            <person name="Costanzo M.C."/>
            <person name="Dwight S.S."/>
            <person name="Hitz B.C."/>
            <person name="Karra K."/>
            <person name="Nash R.S."/>
            <person name="Weng S."/>
            <person name="Wong E.D."/>
            <person name="Lloyd P."/>
            <person name="Skrzypek M.S."/>
            <person name="Miyasato S.R."/>
            <person name="Simison M."/>
            <person name="Cherry J.M."/>
        </authorList>
    </citation>
    <scope>GENOME REANNOTATION</scope>
    <source>
        <strain>ATCC 204508 / S288c</strain>
    </source>
</reference>
<reference key="4">
    <citation type="journal article" date="2007" name="Genome Res.">
        <title>Approaching a complete repository of sequence-verified protein-encoding clones for Saccharomyces cerevisiae.</title>
        <authorList>
            <person name="Hu Y."/>
            <person name="Rolfs A."/>
            <person name="Bhullar B."/>
            <person name="Murthy T.V.S."/>
            <person name="Zhu C."/>
            <person name="Berger M.F."/>
            <person name="Camargo A.A."/>
            <person name="Kelley F."/>
            <person name="McCarron S."/>
            <person name="Jepson D."/>
            <person name="Richardson A."/>
            <person name="Raphael J."/>
            <person name="Moreira D."/>
            <person name="Taycher E."/>
            <person name="Zuo D."/>
            <person name="Mohr S."/>
            <person name="Kane M.F."/>
            <person name="Williamson J."/>
            <person name="Simpson A.J.G."/>
            <person name="Bulyk M.L."/>
            <person name="Harlow E."/>
            <person name="Marsischky G."/>
            <person name="Kolodner R.D."/>
            <person name="LaBaer J."/>
        </authorList>
    </citation>
    <scope>NUCLEOTIDE SEQUENCE [GENOMIC DNA]</scope>
    <source>
        <strain>ATCC 204508 / S288c</strain>
    </source>
</reference>
<reference key="5">
    <citation type="journal article" date="1998" name="Genes Dev.">
        <title>Purification and characterization of the nuclear RNase P holoenzyme complex reveals extensive subunit overlap with RNase MRP.</title>
        <authorList>
            <person name="Chamberlain J.R."/>
            <person name="Lee Y."/>
            <person name="Lane W.S."/>
            <person name="Engelke D.R."/>
        </authorList>
    </citation>
    <scope>FUNCTION</scope>
    <scope>IDENTIFICATION IN THE RNASE P COMPLEX BY MASS SPECTROMETRY</scope>
</reference>
<reference key="6">
    <citation type="journal article" date="2003" name="Nature">
        <title>Global analysis of protein localization in budding yeast.</title>
        <authorList>
            <person name="Huh W.-K."/>
            <person name="Falvo J.V."/>
            <person name="Gerke L.C."/>
            <person name="Carroll A.S."/>
            <person name="Howson R.W."/>
            <person name="Weissman J.S."/>
            <person name="O'Shea E.K."/>
        </authorList>
    </citation>
    <scope>SUBCELLULAR LOCATION [LARGE SCALE ANALYSIS]</scope>
</reference>
<reference key="7">
    <citation type="journal article" date="2005" name="J. Biol. Chem.">
        <title>Characterization and purification of Saccharomyces cerevisiae RNase MRP reveals a new unique protein component.</title>
        <authorList>
            <person name="Salinas K."/>
            <person name="Wierzbicki S."/>
            <person name="Zhou L."/>
            <person name="Schmitt M.E."/>
        </authorList>
    </citation>
    <scope>IDENTIFICATION IN THE RNASE MRP COMPLEX BY MASS SPECTROMETRY</scope>
</reference>
<reference key="8">
    <citation type="journal article" date="2008" name="Mol. Cell. Proteomics">
        <title>A multidimensional chromatography technology for in-depth phosphoproteome analysis.</title>
        <authorList>
            <person name="Albuquerque C.P."/>
            <person name="Smolka M.B."/>
            <person name="Payne S.H."/>
            <person name="Bafna V."/>
            <person name="Eng J."/>
            <person name="Zhou H."/>
        </authorList>
    </citation>
    <scope>PHOSPHORYLATION [LARGE SCALE ANALYSIS] AT SER-115</scope>
    <scope>IDENTIFICATION BY MASS SPECTROMETRY [LARGE SCALE ANALYSIS]</scope>
</reference>
<name>POP7_YEAST</name>
<gene>
    <name type="primary">POP7</name>
    <name type="synonym">RPP2</name>
    <name type="ordered locus">YBR167C</name>
    <name type="ORF">YBR1219</name>
</gene>
<evidence type="ECO:0000256" key="1">
    <source>
        <dbReference type="SAM" id="MobiDB-lite"/>
    </source>
</evidence>
<evidence type="ECO:0000269" key="2">
    <source>
    </source>
</evidence>
<evidence type="ECO:0000269" key="3">
    <source>
    </source>
</evidence>
<evidence type="ECO:0000269" key="4">
    <source>
    </source>
</evidence>
<evidence type="ECO:0000269" key="5">
    <source>
    </source>
</evidence>
<evidence type="ECO:0000305" key="6"/>
<evidence type="ECO:0007744" key="7">
    <source>
    </source>
</evidence>
<evidence type="ECO:0007829" key="8">
    <source>
        <dbReference type="PDB" id="7C79"/>
    </source>
</evidence>